<name>YP53_SCHPO</name>
<proteinExistence type="inferred from homology"/>
<organism>
    <name type="scientific">Schizosaccharomyces pombe (strain 972 / ATCC 24843)</name>
    <name type="common">Fission yeast</name>
    <dbReference type="NCBI Taxonomy" id="284812"/>
    <lineage>
        <taxon>Eukaryota</taxon>
        <taxon>Fungi</taxon>
        <taxon>Dikarya</taxon>
        <taxon>Ascomycota</taxon>
        <taxon>Taphrinomycotina</taxon>
        <taxon>Schizosaccharomycetes</taxon>
        <taxon>Schizosaccharomycetales</taxon>
        <taxon>Schizosaccharomycetaceae</taxon>
        <taxon>Schizosaccharomyces</taxon>
    </lineage>
</organism>
<keyword id="KW-0472">Membrane</keyword>
<keyword id="KW-0812">Transmembrane</keyword>
<keyword id="KW-1133">Transmembrane helix</keyword>
<keyword id="KW-0813">Transport</keyword>
<comment type="subcellular location">
    <subcellularLocation>
        <location evidence="2">Membrane</location>
        <topology evidence="2">Multi-pass membrane protein</topology>
    </subcellularLocation>
</comment>
<comment type="similarity">
    <text evidence="2">Belongs to the major facilitator superfamily.</text>
</comment>
<accession>B5BP47</accession>
<gene>
    <name type="ORF">SPBC460.03</name>
</gene>
<dbReference type="EMBL" id="AB325691">
    <property type="protein sequence ID" value="BAG68903.1"/>
    <property type="molecule type" value="Genomic_DNA"/>
</dbReference>
<dbReference type="SMR" id="B5BP47"/>
<dbReference type="FunCoup" id="B5BP47">
    <property type="interactions" value="40"/>
</dbReference>
<dbReference type="STRING" id="284812.B5BP47"/>
<dbReference type="PaxDb" id="4896-SPBC460.03.1"/>
<dbReference type="EnsemblFungi" id="SPBC460.03.1">
    <property type="protein sequence ID" value="SPBC460.03.1:pep"/>
    <property type="gene ID" value="SPBC460.03"/>
</dbReference>
<dbReference type="PomBase" id="SPBC460.03"/>
<dbReference type="VEuPathDB" id="FungiDB:SPBC460.03"/>
<dbReference type="eggNOG" id="KOG0254">
    <property type="taxonomic scope" value="Eukaryota"/>
</dbReference>
<dbReference type="HOGENOM" id="CLU_000960_22_3_1"/>
<dbReference type="InParanoid" id="B5BP47"/>
<dbReference type="OMA" id="TATITFM"/>
<dbReference type="PRO" id="PR:B5BP47"/>
<dbReference type="GO" id="GO:0000329">
    <property type="term" value="C:fungal-type vacuole membrane"/>
    <property type="evidence" value="ECO:0000314"/>
    <property type="project" value="PomBase"/>
</dbReference>
<dbReference type="GO" id="GO:0015174">
    <property type="term" value="F:basic amino acid transmembrane transporter activity"/>
    <property type="evidence" value="ECO:0000318"/>
    <property type="project" value="GO_Central"/>
</dbReference>
<dbReference type="GO" id="GO:0015179">
    <property type="term" value="F:L-amino acid transmembrane transporter activity"/>
    <property type="evidence" value="ECO:0000250"/>
    <property type="project" value="PomBase"/>
</dbReference>
<dbReference type="GO" id="GO:1990591">
    <property type="term" value="P:asparagine transmembrane import into vacuole"/>
    <property type="evidence" value="ECO:0000315"/>
    <property type="project" value="PomBase"/>
</dbReference>
<dbReference type="GO" id="GO:0015802">
    <property type="term" value="P:basic amino acid transport"/>
    <property type="evidence" value="ECO:0000318"/>
    <property type="project" value="GO_Central"/>
</dbReference>
<dbReference type="GO" id="GO:0090518">
    <property type="term" value="P:L-arginine transmembrane import into vacuole"/>
    <property type="evidence" value="ECO:0000315"/>
    <property type="project" value="PomBase"/>
</dbReference>
<dbReference type="GO" id="GO:0090513">
    <property type="term" value="P:L-histidine transmembrane import into vacuole"/>
    <property type="evidence" value="ECO:0000315"/>
    <property type="project" value="PomBase"/>
</dbReference>
<dbReference type="GO" id="GO:0090517">
    <property type="term" value="P:L-lysine transmembrane import into vacuole"/>
    <property type="evidence" value="ECO:0000315"/>
    <property type="project" value="PomBase"/>
</dbReference>
<dbReference type="GO" id="GO:0110101">
    <property type="term" value="P:L-valine transmembrane import into vacuole"/>
    <property type="evidence" value="ECO:0000315"/>
    <property type="project" value="PomBase"/>
</dbReference>
<dbReference type="GO" id="GO:0055085">
    <property type="term" value="P:transmembrane transport"/>
    <property type="evidence" value="ECO:0000318"/>
    <property type="project" value="GO_Central"/>
</dbReference>
<dbReference type="CDD" id="cd17502">
    <property type="entry name" value="MFS_Azr1_MDR_like"/>
    <property type="match status" value="1"/>
</dbReference>
<dbReference type="FunFam" id="1.20.1720.10:FF:000022">
    <property type="entry name" value="MFS drug transporter, putative"/>
    <property type="match status" value="1"/>
</dbReference>
<dbReference type="Gene3D" id="1.20.1250.20">
    <property type="entry name" value="MFS general substrate transporter like domains"/>
    <property type="match status" value="1"/>
</dbReference>
<dbReference type="Gene3D" id="1.20.1720.10">
    <property type="entry name" value="Multidrug resistance protein D"/>
    <property type="match status" value="1"/>
</dbReference>
<dbReference type="InterPro" id="IPR011701">
    <property type="entry name" value="MFS"/>
</dbReference>
<dbReference type="InterPro" id="IPR020846">
    <property type="entry name" value="MFS_dom"/>
</dbReference>
<dbReference type="InterPro" id="IPR036259">
    <property type="entry name" value="MFS_trans_sf"/>
</dbReference>
<dbReference type="PANTHER" id="PTHR23501">
    <property type="entry name" value="MAJOR FACILITATOR SUPERFAMILY"/>
    <property type="match status" value="1"/>
</dbReference>
<dbReference type="PANTHER" id="PTHR23501:SF81">
    <property type="entry name" value="VACUOLAR BASIC AMINO ACID TRANSPORTER 2"/>
    <property type="match status" value="1"/>
</dbReference>
<dbReference type="Pfam" id="PF07690">
    <property type="entry name" value="MFS_1"/>
    <property type="match status" value="1"/>
</dbReference>
<dbReference type="SUPFAM" id="SSF103473">
    <property type="entry name" value="MFS general substrate transporter"/>
    <property type="match status" value="1"/>
</dbReference>
<dbReference type="PROSITE" id="PS50850">
    <property type="entry name" value="MFS"/>
    <property type="match status" value="1"/>
</dbReference>
<reference key="1">
    <citation type="journal article" date="2008" name="Yeast">
        <title>The gap-filling sequence on the left arm of chromosome 2 in fission yeast Schizosaccharomyces pombe.</title>
        <authorList>
            <person name="Sasaki M."/>
            <person name="Idiris A."/>
            <person name="Tada A."/>
            <person name="Kumagai H."/>
            <person name="Giga-Hama Y."/>
            <person name="Tohda H."/>
        </authorList>
    </citation>
    <scope>NUCLEOTIDE SEQUENCE [LARGE SCALE GENOMIC DNA]</scope>
    <source>
        <strain>972 / ATCC 24843</strain>
    </source>
</reference>
<protein>
    <recommendedName>
        <fullName>Uncharacterized transporter C460.03</fullName>
    </recommendedName>
</protein>
<sequence length="567" mass="61632">MNVQKSNNAEETITPFSEESSLLNSNSYIPATFVDPTTIPQTSTEDIDIHGFNSIFDIPNLAWIEVSLLLNVFLAGFDGTVTASAYTTIGEEFHAANLASWITTSYLITSTTFQPLYGSFSDVLGRRVCLFMASGLFCLGCLWCYFSSGMVSLIFARSFMGIGGGGLITLSTIINSDIIPTRNRGLFQAFQNLLLGFGAICGASFGGVLSEVFSWRLCFLVQVPFSVLSIAVGFFFVKNQSGYSRFHHYCVLFKKIDILGGLLLVSGLTSLLLVLTFGSSRSIQTYRPSQLLLLLGILCIVAFVYVESITEAAPIIPLKLLKGLYSSLVLTTGFLIGLAGYAYLFTLPLFFQLVLGDSPSKAGLRLALPSLSTPIGGLICGILMHRNFRVGKLLFSGVFLMSLGYFLSLFIHPGISPIVLGIFLIPANVGQGIGFPSSLFSFIFAFPQNSHATSTSTLYLIRSIGSLFGVGGLSAVIQLTLRKKMLADLTKFTDLDSKSIQKIIHDVSKSISALYELPEAIQEIVLSDYTFSIRKAQQFTTICCVLALGLCILKDTIKPRTPSGFRY</sequence>
<evidence type="ECO:0000255" key="1"/>
<evidence type="ECO:0000305" key="2"/>
<feature type="chain" id="PRO_0000415921" description="Uncharacterized transporter C460.03">
    <location>
        <begin position="1"/>
        <end position="567"/>
    </location>
</feature>
<feature type="transmembrane region" description="Helical" evidence="1">
    <location>
        <begin position="136"/>
        <end position="156"/>
    </location>
</feature>
<feature type="transmembrane region" description="Helical" evidence="1">
    <location>
        <begin position="159"/>
        <end position="179"/>
    </location>
</feature>
<feature type="transmembrane region" description="Helical" evidence="1">
    <location>
        <begin position="193"/>
        <end position="213"/>
    </location>
</feature>
<feature type="transmembrane region" description="Helical" evidence="1">
    <location>
        <begin position="217"/>
        <end position="237"/>
    </location>
</feature>
<feature type="transmembrane region" description="Helical" evidence="1">
    <location>
        <begin position="258"/>
        <end position="278"/>
    </location>
</feature>
<feature type="transmembrane region" description="Helical" evidence="1">
    <location>
        <begin position="291"/>
        <end position="311"/>
    </location>
</feature>
<feature type="transmembrane region" description="Helical" evidence="1">
    <location>
        <begin position="334"/>
        <end position="354"/>
    </location>
</feature>
<feature type="transmembrane region" description="Helical" evidence="1">
    <location>
        <begin position="364"/>
        <end position="384"/>
    </location>
</feature>
<feature type="transmembrane region" description="Helical" evidence="1">
    <location>
        <begin position="393"/>
        <end position="415"/>
    </location>
</feature>
<feature type="transmembrane region" description="Helical" evidence="1">
    <location>
        <begin position="426"/>
        <end position="446"/>
    </location>
</feature>
<feature type="transmembrane region" description="Helical" evidence="1">
    <location>
        <begin position="457"/>
        <end position="477"/>
    </location>
</feature>
<feature type="transmembrane region" description="Helical" evidence="1">
    <location>
        <begin position="536"/>
        <end position="553"/>
    </location>
</feature>